<gene>
    <name type="primary">barP</name>
    <name type="ordered locus">Hoch_1671</name>
</gene>
<accession>D0LWX4</accession>
<comment type="function">
    <text>May be a dominant-negative inhibitor of eukaryotic actin polymerization.</text>
</comment>
<comment type="induction">
    <text>Constitutively expressed.</text>
</comment>
<comment type="similarity">
    <text evidence="1">Belongs to the actin family.</text>
</comment>
<evidence type="ECO:0000305" key="1"/>
<name>BARP_HALO1</name>
<protein>
    <recommendedName>
        <fullName>Bacterial actin-related protein</fullName>
        <shortName>BARP</shortName>
    </recommendedName>
</protein>
<reference key="1">
    <citation type="journal article" date="2010" name="Stand. Genomic Sci.">
        <title>Complete genome sequence of Haliangium ochraceum type strain (SMP-2).</title>
        <authorList>
            <person name="Ivanova N."/>
            <person name="Daum C."/>
            <person name="Lang E."/>
            <person name="Abt B."/>
            <person name="Kopitz M."/>
            <person name="Saunders E."/>
            <person name="Lapidus A."/>
            <person name="Lucas S."/>
            <person name="Glavina Del Rio T."/>
            <person name="Nolan M."/>
            <person name="Tice H."/>
            <person name="Copeland A."/>
            <person name="Cheng J.F."/>
            <person name="Chen F."/>
            <person name="Bruce D."/>
            <person name="Goodwin L."/>
            <person name="Pitluck S."/>
            <person name="Mavromatis K."/>
            <person name="Pati A."/>
            <person name="Mikhailova N."/>
            <person name="Chen A."/>
            <person name="Palaniappan K."/>
            <person name="Land M."/>
            <person name="Hauser L."/>
            <person name="Chang Y.J."/>
            <person name="Jeffries C.D."/>
            <person name="Detter J.C."/>
            <person name="Brettin T."/>
            <person name="Rohde M."/>
            <person name="Goker M."/>
            <person name="Bristow J."/>
            <person name="Markowitz V."/>
            <person name="Eisen J.A."/>
            <person name="Hugenholtz P."/>
            <person name="Kyrpides N.C."/>
            <person name="Klenk H.P."/>
        </authorList>
    </citation>
    <scope>NUCLEOTIDE SEQUENCE [LARGE SCALE GENOMIC DNA]</scope>
    <source>
        <strain>DSM 14365 / CIP 107738 / JCM 11303 / AJ 13395 / SMP-2</strain>
    </source>
</reference>
<reference key="2">
    <citation type="journal article" date="2009" name="Nature">
        <title>A phylogeny-driven genomic encyclopaedia of Bacteria and Archaea.</title>
        <authorList>
            <person name="Wu D."/>
            <person name="Hugenholtz P."/>
            <person name="Mavromatis K."/>
            <person name="Pukall R."/>
            <person name="Dalin E."/>
            <person name="Ivanova N.N."/>
            <person name="Kunin V."/>
            <person name="Goodwin L."/>
            <person name="Wu M."/>
            <person name="Tindall B.J."/>
            <person name="Hooper S.D."/>
            <person name="Pati A."/>
            <person name="Lykidis A."/>
            <person name="Spring S."/>
            <person name="Anderson I.J."/>
            <person name="D'haeseleer P."/>
            <person name="Zemla A."/>
            <person name="Singer M."/>
            <person name="Lapidus A."/>
            <person name="Nolan M."/>
            <person name="Copeland A."/>
            <person name="Han C."/>
            <person name="Chen F."/>
            <person name="Cheng J.F."/>
            <person name="Lucas S."/>
            <person name="Kerfeld C."/>
            <person name="Lang E."/>
            <person name="Gronow S."/>
            <person name="Chain P."/>
            <person name="Bruce D."/>
            <person name="Rubin E.M."/>
            <person name="Kyrpides N.C."/>
            <person name="Klenk H.P."/>
            <person name="Eisen J.A."/>
        </authorList>
    </citation>
    <scope>PUTATIVE FUNCTION</scope>
    <scope>EXPRESSION</scope>
    <source>
        <strain>DSM 14365 / CIP 107738 / JCM 11303 / AJ 13395 / SMP-2</strain>
    </source>
</reference>
<dbReference type="EMBL" id="CP001804">
    <property type="protein sequence ID" value="ACY14221.1"/>
    <property type="molecule type" value="Genomic_DNA"/>
</dbReference>
<dbReference type="RefSeq" id="WP_012826829.1">
    <property type="nucleotide sequence ID" value="NC_013440.1"/>
</dbReference>
<dbReference type="SMR" id="D0LWX4"/>
<dbReference type="STRING" id="502025.Hoch_1671"/>
<dbReference type="KEGG" id="hoh:Hoch_1671"/>
<dbReference type="eggNOG" id="COG5277">
    <property type="taxonomic scope" value="Bacteria"/>
</dbReference>
<dbReference type="HOGENOM" id="CLU_027965_0_2_7"/>
<dbReference type="OrthoDB" id="6202916at2"/>
<dbReference type="Proteomes" id="UP000001880">
    <property type="component" value="Chromosome"/>
</dbReference>
<dbReference type="FunFam" id="3.90.640.10:FF:000007">
    <property type="entry name" value="Actin like 7B"/>
    <property type="match status" value="1"/>
</dbReference>
<dbReference type="FunFam" id="3.30.420.40:FF:000050">
    <property type="entry name" value="Actin, alpha skeletal muscle"/>
    <property type="match status" value="1"/>
</dbReference>
<dbReference type="Gene3D" id="3.30.420.40">
    <property type="match status" value="2"/>
</dbReference>
<dbReference type="Gene3D" id="3.90.640.10">
    <property type="entry name" value="Actin, Chain A, domain 4"/>
    <property type="match status" value="1"/>
</dbReference>
<dbReference type="InterPro" id="IPR004000">
    <property type="entry name" value="Actin"/>
</dbReference>
<dbReference type="InterPro" id="IPR043129">
    <property type="entry name" value="ATPase_NBD"/>
</dbReference>
<dbReference type="PANTHER" id="PTHR11937">
    <property type="entry name" value="ACTIN"/>
    <property type="match status" value="1"/>
</dbReference>
<dbReference type="Pfam" id="PF00022">
    <property type="entry name" value="Actin"/>
    <property type="match status" value="1"/>
</dbReference>
<dbReference type="PRINTS" id="PR00190">
    <property type="entry name" value="ACTIN"/>
</dbReference>
<dbReference type="SMART" id="SM00268">
    <property type="entry name" value="ACTIN"/>
    <property type="match status" value="1"/>
</dbReference>
<dbReference type="SUPFAM" id="SSF53067">
    <property type="entry name" value="Actin-like ATPase domain"/>
    <property type="match status" value="2"/>
</dbReference>
<keyword id="KW-1185">Reference proteome</keyword>
<sequence>MSDSYVFSSPIIIHPGSDTLQAGLADEEHPGSIFPNIVGRHKLAGLMEWVDQRVLCVGQEAIDQSATVLLRHPVWSGIVGDWEAFAAVLRHTFYRALWVAPEEHPIVVTESPHVYRSFQLRREQLTRLLFETFHAPQVAVCSEAAMSLYACGLDTGLVVSLGDFVSYVAPVHRGAIVDAGLTFLEPDGRSITEYLSRLLLERGHVFTSPEALRLVRDIKETLCYVADDVAKEAARNADSVEATYLLPNGETLVLGNERFRCPEVLFHPDLLGWESPGLTDAVCNAIMKCDPSLQAELFGNIVVTGGGSLFPGLSERLQRELEQRAPAEAPVHLLTRDDRRHLPWKGAARFARDAQFAGFALTRQAYERHGAELIYQM</sequence>
<feature type="chain" id="PRO_0000413951" description="Bacterial actin-related protein">
    <location>
        <begin position="1"/>
        <end position="377"/>
    </location>
</feature>
<organism>
    <name type="scientific">Haliangium ochraceum (strain DSM 14365 / JCM 11303 / SMP-2)</name>
    <dbReference type="NCBI Taxonomy" id="502025"/>
    <lineage>
        <taxon>Bacteria</taxon>
        <taxon>Pseudomonadati</taxon>
        <taxon>Myxococcota</taxon>
        <taxon>Polyangia</taxon>
        <taxon>Haliangiales</taxon>
        <taxon>Kofleriaceae</taxon>
        <taxon>Haliangium</taxon>
    </lineage>
</organism>
<proteinExistence type="evidence at transcript level"/>